<keyword id="KW-0002">3D-structure</keyword>
<keyword id="KW-0025">Alternative splicing</keyword>
<keyword id="KW-0067">ATP-binding</keyword>
<keyword id="KW-1003">Cell membrane</keyword>
<keyword id="KW-0217">Developmental protein</keyword>
<keyword id="KW-0221">Differentiation</keyword>
<keyword id="KW-1015">Disulfide bond</keyword>
<keyword id="KW-0325">Glycoprotein</keyword>
<keyword id="KW-0393">Immunoglobulin domain</keyword>
<keyword id="KW-0418">Kinase</keyword>
<keyword id="KW-0460">Magnesium</keyword>
<keyword id="KW-0472">Membrane</keyword>
<keyword id="KW-0479">Metal-binding</keyword>
<keyword id="KW-0514">Muscle protein</keyword>
<keyword id="KW-0547">Nucleotide-binding</keyword>
<keyword id="KW-0597">Phosphoprotein</keyword>
<keyword id="KW-0628">Postsynaptic cell membrane</keyword>
<keyword id="KW-0675">Receptor</keyword>
<keyword id="KW-1185">Reference proteome</keyword>
<keyword id="KW-0677">Repeat</keyword>
<keyword id="KW-0732">Signal</keyword>
<keyword id="KW-0770">Synapse</keyword>
<keyword id="KW-0808">Transferase</keyword>
<keyword id="KW-0812">Transmembrane</keyword>
<keyword id="KW-1133">Transmembrane helix</keyword>
<keyword id="KW-0829">Tyrosine-protein kinase</keyword>
<keyword id="KW-0832">Ubl conjugation</keyword>
<name>MUSK_MOUSE</name>
<gene>
    <name type="primary">Musk</name>
    <name type="synonym">Nsk2</name>
</gene>
<dbReference type="EC" id="2.7.10.1"/>
<dbReference type="EMBL" id="U37708">
    <property type="protein sequence ID" value="AAA79203.1"/>
    <property type="molecule type" value="mRNA"/>
</dbReference>
<dbReference type="EMBL" id="U37709">
    <property type="protein sequence ID" value="AAA79204.1"/>
    <property type="molecule type" value="mRNA"/>
</dbReference>
<dbReference type="EMBL" id="X86444">
    <property type="protein sequence ID" value="CAA60165.1"/>
    <property type="molecule type" value="mRNA"/>
</dbReference>
<dbReference type="EMBL" id="X86445">
    <property type="protein sequence ID" value="CAA60166.1"/>
    <property type="molecule type" value="Genomic_DNA"/>
</dbReference>
<dbReference type="CCDS" id="CCDS18210.1">
    <molecule id="Q61006-2"/>
</dbReference>
<dbReference type="CCDS" id="CCDS18211.1">
    <molecule id="Q61006-1"/>
</dbReference>
<dbReference type="PIR" id="I48696">
    <property type="entry name" value="I48696"/>
</dbReference>
<dbReference type="PIR" id="I48697">
    <property type="entry name" value="I48697"/>
</dbReference>
<dbReference type="RefSeq" id="NP_001032205.1">
    <property type="nucleotide sequence ID" value="NM_001037128.1"/>
</dbReference>
<dbReference type="RefSeq" id="NP_001032206.1">
    <property type="nucleotide sequence ID" value="NM_001037129.1"/>
</dbReference>
<dbReference type="RefSeq" id="NP_001032207.1">
    <molecule id="Q61006-2"/>
    <property type="nucleotide sequence ID" value="NM_001037130.1"/>
</dbReference>
<dbReference type="RefSeq" id="NP_035074.2">
    <molecule id="Q61006-1"/>
    <property type="nucleotide sequence ID" value="NM_010944.2"/>
</dbReference>
<dbReference type="PDB" id="3ML4">
    <property type="method" value="X-ray"/>
    <property type="resolution" value="2.60 A"/>
    <property type="chains" value="E/F/G/H=544-556"/>
</dbReference>
<dbReference type="PDBsum" id="3ML4"/>
<dbReference type="SMR" id="Q61006"/>
<dbReference type="BioGRID" id="201860">
    <property type="interactions" value="5"/>
</dbReference>
<dbReference type="CORUM" id="Q61006"/>
<dbReference type="ELM" id="Q61006"/>
<dbReference type="FunCoup" id="Q61006">
    <property type="interactions" value="34"/>
</dbReference>
<dbReference type="IntAct" id="Q61006">
    <property type="interactions" value="4"/>
</dbReference>
<dbReference type="STRING" id="10090.ENSMUSP00000095665"/>
<dbReference type="GlyCosmos" id="Q61006">
    <property type="glycosylation" value="3 sites, No reported glycans"/>
</dbReference>
<dbReference type="GlyGen" id="Q61006">
    <property type="glycosylation" value="4 sites"/>
</dbReference>
<dbReference type="iPTMnet" id="Q61006"/>
<dbReference type="PhosphoSitePlus" id="Q61006"/>
<dbReference type="jPOST" id="Q61006"/>
<dbReference type="PaxDb" id="10090-ENSMUSP00000081625"/>
<dbReference type="ProteomicsDB" id="290077">
    <molecule id="Q61006-1"/>
</dbReference>
<dbReference type="ProteomicsDB" id="290078">
    <molecule id="Q61006-2"/>
</dbReference>
<dbReference type="ProteomicsDB" id="290079">
    <molecule id="Q61006-3"/>
</dbReference>
<dbReference type="ProteomicsDB" id="290080">
    <molecule id="Q61006-4"/>
</dbReference>
<dbReference type="Antibodypedia" id="29502">
    <property type="antibodies" value="477 antibodies from 34 providers"/>
</dbReference>
<dbReference type="DNASU" id="18198"/>
<dbReference type="Ensembl" id="ENSMUST00000084578.12">
    <molecule id="Q61006-1"/>
    <property type="protein sequence ID" value="ENSMUSP00000081625.6"/>
    <property type="gene ID" value="ENSMUSG00000057280.17"/>
</dbReference>
<dbReference type="Ensembl" id="ENSMUST00000102893.10">
    <molecule id="Q61006-2"/>
    <property type="protein sequence ID" value="ENSMUSP00000099957.4"/>
    <property type="gene ID" value="ENSMUSG00000057280.17"/>
</dbReference>
<dbReference type="GeneID" id="18198"/>
<dbReference type="KEGG" id="mmu:18198"/>
<dbReference type="UCSC" id="uc033icg.1">
    <molecule id="Q61006-1"/>
    <property type="organism name" value="mouse"/>
</dbReference>
<dbReference type="AGR" id="MGI:103581"/>
<dbReference type="CTD" id="4593"/>
<dbReference type="MGI" id="MGI:103581">
    <property type="gene designation" value="Musk"/>
</dbReference>
<dbReference type="VEuPathDB" id="HostDB:ENSMUSG00000057280"/>
<dbReference type="eggNOG" id="KOG1026">
    <property type="taxonomic scope" value="Eukaryota"/>
</dbReference>
<dbReference type="GeneTree" id="ENSGT00940000158226"/>
<dbReference type="HOGENOM" id="CLU_000288_30_5_1"/>
<dbReference type="InParanoid" id="Q61006"/>
<dbReference type="OMA" id="KNNHPIM"/>
<dbReference type="OrthoDB" id="3256376at2759"/>
<dbReference type="TreeFam" id="TF106465"/>
<dbReference type="BRENDA" id="2.7.10.1">
    <property type="organism ID" value="3474"/>
</dbReference>
<dbReference type="BioGRID-ORCS" id="18198">
    <property type="hits" value="1 hit in 80 CRISPR screens"/>
</dbReference>
<dbReference type="ChiTaRS" id="Musk">
    <property type="organism name" value="mouse"/>
</dbReference>
<dbReference type="EvolutionaryTrace" id="Q61006"/>
<dbReference type="PRO" id="PR:Q61006"/>
<dbReference type="Proteomes" id="UP000000589">
    <property type="component" value="Chromosome 4"/>
</dbReference>
<dbReference type="RNAct" id="Q61006">
    <property type="molecule type" value="protein"/>
</dbReference>
<dbReference type="Bgee" id="ENSMUSG00000057280">
    <property type="expression patterns" value="Expressed in secondary oocyte and 92 other cell types or tissues"/>
</dbReference>
<dbReference type="ExpressionAtlas" id="Q61006">
    <property type="expression patterns" value="baseline and differential"/>
</dbReference>
<dbReference type="GO" id="GO:0016020">
    <property type="term" value="C:membrane"/>
    <property type="evidence" value="ECO:0000314"/>
    <property type="project" value="MGI"/>
</dbReference>
<dbReference type="GO" id="GO:0031594">
    <property type="term" value="C:neuromuscular junction"/>
    <property type="evidence" value="ECO:0000314"/>
    <property type="project" value="UniProtKB"/>
</dbReference>
<dbReference type="GO" id="GO:0005886">
    <property type="term" value="C:plasma membrane"/>
    <property type="evidence" value="ECO:0000314"/>
    <property type="project" value="UniProtKB"/>
</dbReference>
<dbReference type="GO" id="GO:0045211">
    <property type="term" value="C:postsynaptic membrane"/>
    <property type="evidence" value="ECO:0000314"/>
    <property type="project" value="UniProtKB"/>
</dbReference>
<dbReference type="GO" id="GO:0043235">
    <property type="term" value="C:receptor complex"/>
    <property type="evidence" value="ECO:0000266"/>
    <property type="project" value="MGI"/>
</dbReference>
<dbReference type="GO" id="GO:0045202">
    <property type="term" value="C:synapse"/>
    <property type="evidence" value="ECO:0000314"/>
    <property type="project" value="MGI"/>
</dbReference>
<dbReference type="GO" id="GO:0005524">
    <property type="term" value="F:ATP binding"/>
    <property type="evidence" value="ECO:0007669"/>
    <property type="project" value="UniProtKB-KW"/>
</dbReference>
<dbReference type="GO" id="GO:0046872">
    <property type="term" value="F:metal ion binding"/>
    <property type="evidence" value="ECO:0007669"/>
    <property type="project" value="UniProtKB-KW"/>
</dbReference>
<dbReference type="GO" id="GO:0030165">
    <property type="term" value="F:PDZ domain binding"/>
    <property type="evidence" value="ECO:0000353"/>
    <property type="project" value="UniProtKB"/>
</dbReference>
<dbReference type="GO" id="GO:0004713">
    <property type="term" value="F:protein tyrosine kinase activity"/>
    <property type="evidence" value="ECO:0000314"/>
    <property type="project" value="MGI"/>
</dbReference>
<dbReference type="GO" id="GO:0004714">
    <property type="term" value="F:transmembrane receptor protein tyrosine kinase activity"/>
    <property type="evidence" value="ECO:0000304"/>
    <property type="project" value="MGI"/>
</dbReference>
<dbReference type="GO" id="GO:0030154">
    <property type="term" value="P:cell differentiation"/>
    <property type="evidence" value="ECO:0007669"/>
    <property type="project" value="UniProtKB-KW"/>
</dbReference>
<dbReference type="GO" id="GO:0007167">
    <property type="term" value="P:enzyme-linked receptor protein signaling pathway"/>
    <property type="evidence" value="ECO:0000314"/>
    <property type="project" value="MGI"/>
</dbReference>
<dbReference type="GO" id="GO:0097049">
    <property type="term" value="P:motor neuron apoptotic process"/>
    <property type="evidence" value="ECO:0000315"/>
    <property type="project" value="MGI"/>
</dbReference>
<dbReference type="GO" id="GO:0007528">
    <property type="term" value="P:neuromuscular junction development"/>
    <property type="evidence" value="ECO:0000316"/>
    <property type="project" value="MGI"/>
</dbReference>
<dbReference type="GO" id="GO:2000673">
    <property type="term" value="P:positive regulation of motor neuron apoptotic process"/>
    <property type="evidence" value="ECO:0000315"/>
    <property type="project" value="MGI"/>
</dbReference>
<dbReference type="GO" id="GO:2000541">
    <property type="term" value="P:positive regulation of protein geranylgeranylation"/>
    <property type="evidence" value="ECO:0000315"/>
    <property type="project" value="UniProtKB"/>
</dbReference>
<dbReference type="GO" id="GO:0001934">
    <property type="term" value="P:positive regulation of protein phosphorylation"/>
    <property type="evidence" value="ECO:0000315"/>
    <property type="project" value="UniProtKB"/>
</dbReference>
<dbReference type="GO" id="GO:0035022">
    <property type="term" value="P:positive regulation of Rac protein signal transduction"/>
    <property type="evidence" value="ECO:0000314"/>
    <property type="project" value="MGI"/>
</dbReference>
<dbReference type="GO" id="GO:1904395">
    <property type="term" value="P:positive regulation of skeletal muscle acetylcholine-gated channel clustering"/>
    <property type="evidence" value="ECO:0000314"/>
    <property type="project" value="MGI"/>
</dbReference>
<dbReference type="GO" id="GO:0043113">
    <property type="term" value="P:receptor clustering"/>
    <property type="evidence" value="ECO:0000315"/>
    <property type="project" value="MGI"/>
</dbReference>
<dbReference type="GO" id="GO:0006355">
    <property type="term" value="P:regulation of DNA-templated transcription"/>
    <property type="evidence" value="ECO:0000315"/>
    <property type="project" value="MGI"/>
</dbReference>
<dbReference type="GO" id="GO:0008582">
    <property type="term" value="P:regulation of synaptic assembly at neuromuscular junction"/>
    <property type="evidence" value="ECO:0000315"/>
    <property type="project" value="MGI"/>
</dbReference>
<dbReference type="GO" id="GO:0071340">
    <property type="term" value="P:skeletal muscle acetylcholine-gated channel clustering"/>
    <property type="evidence" value="ECO:0000315"/>
    <property type="project" value="UniProtKB"/>
</dbReference>
<dbReference type="CDD" id="cd07469">
    <property type="entry name" value="CRD_TK_ROR_related"/>
    <property type="match status" value="1"/>
</dbReference>
<dbReference type="CDD" id="cd20970">
    <property type="entry name" value="IgI_1_MuSK"/>
    <property type="match status" value="1"/>
</dbReference>
<dbReference type="CDD" id="cd20968">
    <property type="entry name" value="IgI_2_MuSK"/>
    <property type="match status" value="1"/>
</dbReference>
<dbReference type="CDD" id="cd05050">
    <property type="entry name" value="PTKc_Musk"/>
    <property type="match status" value="1"/>
</dbReference>
<dbReference type="FunFam" id="1.10.510.10:FF:000176">
    <property type="entry name" value="Muscle, skeletal receptor tyrosine protein kinase"/>
    <property type="match status" value="1"/>
</dbReference>
<dbReference type="FunFam" id="2.60.40.10:FF:000260">
    <property type="entry name" value="Muscle, skeletal receptor tyrosine protein kinase"/>
    <property type="match status" value="1"/>
</dbReference>
<dbReference type="FunFam" id="2.60.40.10:FF:000322">
    <property type="entry name" value="Muscle, skeletal receptor tyrosine protein kinase"/>
    <property type="match status" value="1"/>
</dbReference>
<dbReference type="FunFam" id="2.60.40.10:FF:000409">
    <property type="entry name" value="Muscle, skeletal receptor tyrosine protein kinase"/>
    <property type="match status" value="1"/>
</dbReference>
<dbReference type="FunFam" id="3.30.200.20:FF:000159">
    <property type="entry name" value="muscle, skeletal receptor tyrosine-protein kinase"/>
    <property type="match status" value="1"/>
</dbReference>
<dbReference type="FunFam" id="1.10.2000.10:FF:000009">
    <property type="entry name" value="Muscle, skeletal, receptor tyrosine kinase"/>
    <property type="match status" value="1"/>
</dbReference>
<dbReference type="Gene3D" id="1.10.2000.10">
    <property type="entry name" value="Frizzled cysteine-rich domain"/>
    <property type="match status" value="1"/>
</dbReference>
<dbReference type="Gene3D" id="2.60.40.10">
    <property type="entry name" value="Immunoglobulins"/>
    <property type="match status" value="3"/>
</dbReference>
<dbReference type="Gene3D" id="3.30.200.20">
    <property type="entry name" value="Phosphorylase Kinase, domain 1"/>
    <property type="match status" value="1"/>
</dbReference>
<dbReference type="Gene3D" id="1.10.510.10">
    <property type="entry name" value="Transferase(Phosphotransferase) domain 1"/>
    <property type="match status" value="1"/>
</dbReference>
<dbReference type="InterPro" id="IPR020067">
    <property type="entry name" value="Frizzled_dom"/>
</dbReference>
<dbReference type="InterPro" id="IPR036790">
    <property type="entry name" value="Frizzled_dom_sf"/>
</dbReference>
<dbReference type="InterPro" id="IPR007110">
    <property type="entry name" value="Ig-like_dom"/>
</dbReference>
<dbReference type="InterPro" id="IPR036179">
    <property type="entry name" value="Ig-like_dom_sf"/>
</dbReference>
<dbReference type="InterPro" id="IPR013783">
    <property type="entry name" value="Ig-like_fold"/>
</dbReference>
<dbReference type="InterPro" id="IPR013098">
    <property type="entry name" value="Ig_I-set"/>
</dbReference>
<dbReference type="InterPro" id="IPR003599">
    <property type="entry name" value="Ig_sub"/>
</dbReference>
<dbReference type="InterPro" id="IPR003598">
    <property type="entry name" value="Ig_sub2"/>
</dbReference>
<dbReference type="InterPro" id="IPR011009">
    <property type="entry name" value="Kinase-like_dom_sf"/>
</dbReference>
<dbReference type="InterPro" id="IPR000719">
    <property type="entry name" value="Prot_kinase_dom"/>
</dbReference>
<dbReference type="InterPro" id="IPR017441">
    <property type="entry name" value="Protein_kinase_ATP_BS"/>
</dbReference>
<dbReference type="InterPro" id="IPR050122">
    <property type="entry name" value="RTK"/>
</dbReference>
<dbReference type="InterPro" id="IPR001245">
    <property type="entry name" value="Ser-Thr/Tyr_kinase_cat_dom"/>
</dbReference>
<dbReference type="InterPro" id="IPR008266">
    <property type="entry name" value="Tyr_kinase_AS"/>
</dbReference>
<dbReference type="InterPro" id="IPR020635">
    <property type="entry name" value="Tyr_kinase_cat_dom"/>
</dbReference>
<dbReference type="PANTHER" id="PTHR24416:SF317">
    <property type="entry name" value="MUSCLE, SKELETAL RECEPTOR TYROSINE-PROTEIN KINASE"/>
    <property type="match status" value="1"/>
</dbReference>
<dbReference type="PANTHER" id="PTHR24416">
    <property type="entry name" value="TYROSINE-PROTEIN KINASE RECEPTOR"/>
    <property type="match status" value="1"/>
</dbReference>
<dbReference type="Pfam" id="PF01392">
    <property type="entry name" value="Fz"/>
    <property type="match status" value="1"/>
</dbReference>
<dbReference type="Pfam" id="PF07679">
    <property type="entry name" value="I-set"/>
    <property type="match status" value="2"/>
</dbReference>
<dbReference type="Pfam" id="PF13927">
    <property type="entry name" value="Ig_3"/>
    <property type="match status" value="1"/>
</dbReference>
<dbReference type="Pfam" id="PF07714">
    <property type="entry name" value="PK_Tyr_Ser-Thr"/>
    <property type="match status" value="1"/>
</dbReference>
<dbReference type="PIRSF" id="PIRSF000615">
    <property type="entry name" value="TyrPK_CSF1-R"/>
    <property type="match status" value="1"/>
</dbReference>
<dbReference type="PRINTS" id="PR00109">
    <property type="entry name" value="TYRKINASE"/>
</dbReference>
<dbReference type="SMART" id="SM00409">
    <property type="entry name" value="IG"/>
    <property type="match status" value="3"/>
</dbReference>
<dbReference type="SMART" id="SM00408">
    <property type="entry name" value="IGc2"/>
    <property type="match status" value="3"/>
</dbReference>
<dbReference type="SMART" id="SM00219">
    <property type="entry name" value="TyrKc"/>
    <property type="match status" value="1"/>
</dbReference>
<dbReference type="SUPFAM" id="SSF48726">
    <property type="entry name" value="Immunoglobulin"/>
    <property type="match status" value="3"/>
</dbReference>
<dbReference type="SUPFAM" id="SSF56112">
    <property type="entry name" value="Protein kinase-like (PK-like)"/>
    <property type="match status" value="1"/>
</dbReference>
<dbReference type="PROSITE" id="PS50038">
    <property type="entry name" value="FZ"/>
    <property type="match status" value="1"/>
</dbReference>
<dbReference type="PROSITE" id="PS50835">
    <property type="entry name" value="IG_LIKE"/>
    <property type="match status" value="3"/>
</dbReference>
<dbReference type="PROSITE" id="PS00107">
    <property type="entry name" value="PROTEIN_KINASE_ATP"/>
    <property type="match status" value="1"/>
</dbReference>
<dbReference type="PROSITE" id="PS50011">
    <property type="entry name" value="PROTEIN_KINASE_DOM"/>
    <property type="match status" value="1"/>
</dbReference>
<dbReference type="PROSITE" id="PS00109">
    <property type="entry name" value="PROTEIN_KINASE_TYR"/>
    <property type="match status" value="1"/>
</dbReference>
<comment type="function">
    <text evidence="8 10 11 13 23">Receptor tyrosine kinase which plays a central role in the formation and the maintenance of the neuromuscular junction (NMJ), the synapse between the motor neuron and the skeletal muscle. Recruitment of AGRIN by LRP4 to the MUSK signaling complex induces phosphorylation and activation of MUSK, the kinase of the complex. The activation of MUSK in myotubes regulates the formation of NMJs through the regulation of different processes including the specific expression of genes in subsynaptic nuclei, the reorganization of the actin cytoskeleton and the clustering of the acetylcholine receptors (AChR) in the postsynaptic membrane. May regulate AChR phosphorylation and clustering through activation of ABL1 and Src family kinases which in turn regulate MUSK. DVL1 and PAK1 that form a ternary complex with MUSK are also important for MUSK-dependent regulation of AChR clustering. May positively regulate Rho family GTPases through FNTA. Mediates the phosphorylation of FNTA which promotes prenylation, recruitment to membranes and activation of RAC1 a regulator of the actin cytoskeleton and of gene expression. Other effectors of the MUSK signaling include DNAJA3 which functions downstream of MUSK. May also play a role within the central nervous system by mediating cholinergic responses, synaptic plasticity and memory formation.</text>
</comment>
<comment type="catalytic activity">
    <reaction evidence="7">
        <text>L-tyrosyl-[protein] + ATP = O-phospho-L-tyrosyl-[protein] + ADP + H(+)</text>
        <dbReference type="Rhea" id="RHEA:10596"/>
        <dbReference type="Rhea" id="RHEA-COMP:10136"/>
        <dbReference type="Rhea" id="RHEA-COMP:20101"/>
        <dbReference type="ChEBI" id="CHEBI:15378"/>
        <dbReference type="ChEBI" id="CHEBI:30616"/>
        <dbReference type="ChEBI" id="CHEBI:46858"/>
        <dbReference type="ChEBI" id="CHEBI:61978"/>
        <dbReference type="ChEBI" id="CHEBI:456216"/>
        <dbReference type="EC" id="2.7.10.1"/>
    </reaction>
</comment>
<comment type="cofactor">
    <cofactor evidence="2">
        <name>Mg(2+)</name>
        <dbReference type="ChEBI" id="CHEBI:18420"/>
    </cofactor>
</comment>
<comment type="activity regulation">
    <text evidence="15">Positively regulated by CK2.</text>
</comment>
<comment type="subunit">
    <text evidence="9 11 12 14 15 16 17 18 19 20 21 27">Monomer. Homodimer (Probable). Interacts with LRP4; the heterodimer forms an AGRIN receptor complex that binds AGRIN resulting in activation of MUSK. Forms a heterotetramer composed of 2 DOK7 and 2 MUSK molecules which facilitates MUSK trans-autophosphorylation on tyrosine residue and activation. Interacts (via cytoplasmic part) with DOK7 (via IRS-type PTB domain); requires MUSK phosphorylation. Interacts with DVL1 (via DEP domain); the interaction is direct and mediates the formation of a DVL1, MUSK and PAK1 ternary complex involved in AChR clustering. Interacts with PDZRN3; this interaction is enhanced by agrin. Interacts with FNTA; the interaction is direct and mediates AGRIN-induced phosphorylation and activation of FNTA. Interacts with CSNK2B; mediates regulation by CK2. Interacts (via the cytoplasmic domain) with DNAJA3. Interacts with NSF; may regulate MUSK endocytosis and activity. Interacts with CAV3; may regulate MUSK signaling. Interacts with RNF31.</text>
</comment>
<comment type="interaction">
    <interactant intactId="EBI-3989087">
        <id>Q61006</id>
    </interactant>
    <interactant intactId="EBI-3989091">
        <id>Q18PE0</id>
        <label>Dok7</label>
    </interactant>
    <organismsDiffer>false</organismsDiffer>
    <experiments>3</experiments>
</comment>
<comment type="interaction">
    <interactant intactId="EBI-6308424">
        <id>Q61006-3</id>
    </interactant>
    <interactant intactId="EBI-398006">
        <id>P46460</id>
        <label>Nsf</label>
    </interactant>
    <organismsDiffer>false</organismsDiffer>
    <experiments>5</experiments>
</comment>
<comment type="subcellular location">
    <subcellularLocation>
        <location evidence="19">Postsynaptic cell membrane</location>
        <topology evidence="19">Single-pass type I membrane protein</topology>
    </subcellularLocation>
    <text>Localizes to the postsynaptic cell membrane of the neuromuscular junction.</text>
</comment>
<comment type="alternative products">
    <event type="alternative splicing"/>
    <isoform>
        <id>Q61006-1</id>
        <name>1</name>
        <name>MLK2</name>
        <sequence type="displayed"/>
    </isoform>
    <isoform>
        <id>Q61006-2</id>
        <name>2</name>
        <name>MLK1</name>
        <sequence type="described" ref="VSP_010784"/>
    </isoform>
    <isoform>
        <id>Q61006-3</id>
        <name>3</name>
        <sequence type="described" ref="VSP_010785"/>
    </isoform>
    <isoform>
        <id>Q61006-4</id>
        <name>4</name>
        <sequence type="described" ref="VSP_010786"/>
    </isoform>
</comment>
<comment type="tissue specificity">
    <text evidence="22">Expressed preferentially in skeletal muscle.</text>
</comment>
<comment type="developmental stage">
    <text evidence="22">Skeletal myogenesis is a major site of expression during normal embryogenesis. In addition, the ganglia of the developing peripheral nervous system and various embryonic epithelia, including those of kidney, lung and gut are also sites of expression.</text>
</comment>
<comment type="PTM">
    <text evidence="16">Ubiquitinated by PDZRN3. Ubiquitination promotes endocytosis and lysosomal degradation.</text>
</comment>
<comment type="PTM">
    <text evidence="14 15 18 21 24">Phosphorylated (PubMed:16818610). Phosphorylation is induced by AGRIN (PubMed:18848351, PubMed:8653787). Autophosphorylated. Autophosphorylation at Tyr-553 is required for interaction with DOK7 which in turn stimulates the phosphorylation and the activation of MUSK (PubMed:16794080, PubMed:20603078).</text>
</comment>
<comment type="PTM">
    <text evidence="1">Neddylated.</text>
</comment>
<comment type="disruption phenotype">
    <text evidence="23">Mice die perinatally being unable to take a breath and to respond to tail or leg pinch. Despite the presence of apparently normal skeletal muscle, the absence of differentiated nerve terminals is sufficient to account for this phenotype. Every aspect of NMJ formation examined is absent in these mice. Branches of the main intramuscular nerve do not establish normal contacts with the muscle, do not form correctly positioned or specialized nerve terminals, and are apparently not given appropriate signals to stop their wandering aimlessly across the muscle. Furthermore, postsynaptic differentiation is absent, muscle-derived proteins normally localized to the synaptic basal lamina or the postsynaptic membrane being uniformly distributed in myofibers.</text>
</comment>
<comment type="similarity">
    <text evidence="6">Belongs to the protein kinase superfamily. Tyr protein kinase family.</text>
</comment>
<accession>Q61006</accession>
<accession>Q61005</accession>
<accession>Q61987</accession>
<accession>Q61988</accession>
<organism>
    <name type="scientific">Mus musculus</name>
    <name type="common">Mouse</name>
    <dbReference type="NCBI Taxonomy" id="10090"/>
    <lineage>
        <taxon>Eukaryota</taxon>
        <taxon>Metazoa</taxon>
        <taxon>Chordata</taxon>
        <taxon>Craniata</taxon>
        <taxon>Vertebrata</taxon>
        <taxon>Euteleostomi</taxon>
        <taxon>Mammalia</taxon>
        <taxon>Eutheria</taxon>
        <taxon>Euarchontoglires</taxon>
        <taxon>Glires</taxon>
        <taxon>Rodentia</taxon>
        <taxon>Myomorpha</taxon>
        <taxon>Muroidea</taxon>
        <taxon>Muridae</taxon>
        <taxon>Murinae</taxon>
        <taxon>Mus</taxon>
        <taxon>Mus</taxon>
    </lineage>
</organism>
<reference key="1">
    <citation type="submission" date="1995-10" db="EMBL/GenBank/DDBJ databases">
        <authorList>
            <person name="Caruso A."/>
            <person name="Morris J.C."/>
            <person name="Neben S."/>
            <person name="Finnerty H."/>
            <person name="Beier D."/>
            <person name="Turner K."/>
            <person name="Wood C.R."/>
        </authorList>
    </citation>
    <scope>NUCLEOTIDE SEQUENCE [MRNA] (ISOFORMS 1 AND 2)</scope>
</reference>
<reference key="2">
    <citation type="journal article" date="1995" name="Oncogene">
        <title>Cloning and developmental expression of Nsk2, a novel receptor tyrosine kinase implicated in skeletal myogenesis.</title>
        <authorList>
            <person name="Ganju P."/>
            <person name="Walls E."/>
            <person name="Brennan J."/>
            <person name="Reith A.D."/>
        </authorList>
    </citation>
    <scope>NUCLEOTIDE SEQUENCE [GENOMIC DNA / MRNA] (ISOFORMS 3 AND 4)</scope>
    <scope>DEVELOPMENTAL STAGE</scope>
    <scope>TISSUE SPECIFICITY</scope>
    <source>
        <tissue>Myoblast</tissue>
    </source>
</reference>
<reference key="3">
    <citation type="journal article" date="1996" name="Cell">
        <title>The receptor tyrosine kinase MuSK is required for neuromuscular junction formation in vivo.</title>
        <authorList>
            <person name="DeChiara T.M."/>
            <person name="Bowen D.C."/>
            <person name="Valenzuela D.M."/>
            <person name="Simmons M.V."/>
            <person name="Poueymirou W.T."/>
            <person name="Thomas S."/>
            <person name="Kinetz E."/>
            <person name="Compton D.L."/>
            <person name="Rojas E."/>
            <person name="Park J.S."/>
            <person name="Smith C."/>
            <person name="DiStefano P.S."/>
            <person name="Glass D.J."/>
            <person name="Burden S.J."/>
            <person name="Yancopoulos G.D."/>
        </authorList>
    </citation>
    <scope>DISRUPTION PHENOTYPE</scope>
    <scope>FUNCTION IN NEUROMUSCULAR JUNCTION DEVELOPMENT</scope>
</reference>
<reference key="4">
    <citation type="journal article" date="1996" name="Cell">
        <title>Agrin acts via a MuSK receptor complex.</title>
        <authorList>
            <person name="Glass D.J."/>
            <person name="Bowen D.C."/>
            <person name="Stitt T.N."/>
            <person name="Radziejewski C."/>
            <person name="Bruno J."/>
            <person name="Ryan T.E."/>
            <person name="Gies D.R."/>
            <person name="Shah S."/>
            <person name="Mattsson K."/>
            <person name="Burden S.J."/>
            <person name="DiStefano P.S."/>
            <person name="Valenzuela D.M."/>
            <person name="DeChiara T.M."/>
            <person name="Yancopoulos G.D."/>
        </authorList>
    </citation>
    <scope>IDENTIFICATION OF AGRIN AS LIGAND</scope>
    <scope>IDENTIFICATION OF THE AGRIN RECEPTOR COMPLEX</scope>
    <scope>PHOSPHORYLATION</scope>
</reference>
<reference key="5">
    <citation type="journal article" date="2001" name="Nature">
        <title>Distinct roles of nerve and muscle in postsynaptic differentiation of the neuromuscular synapse.</title>
        <authorList>
            <person name="Lin W."/>
            <person name="Burgess R.W."/>
            <person name="Dominguez B."/>
            <person name="Pfaff S.L."/>
            <person name="Sanes J.R."/>
            <person name="Lee K.F."/>
        </authorList>
    </citation>
    <scope>FUNCTION IN ACETYLCHOLINE RECEPTOR CLUSTERING</scope>
</reference>
<reference key="6">
    <citation type="journal article" date="2002" name="Neuron">
        <title>Regulation of AChR clustering by Dishevelled interacting with MuSK and PAK1.</title>
        <authorList>
            <person name="Luo Z.G."/>
            <person name="Wang Q."/>
            <person name="Zhou J.Z."/>
            <person name="Wang J."/>
            <person name="Luo Z."/>
            <person name="Liu M."/>
            <person name="He X."/>
            <person name="Wynshaw-Boris A."/>
            <person name="Xiong W.C."/>
            <person name="Lu B."/>
            <person name="Mei L."/>
        </authorList>
    </citation>
    <scope>INTERACTION WITH DVL1 AND PAK1</scope>
</reference>
<reference key="7">
    <citation type="journal article" date="2003" name="J. Cell Biol.">
        <title>A novel pathway for MuSK to induce key genes in neuromuscular synapse formation.</title>
        <authorList>
            <person name="Lacazette E."/>
            <person name="Le Calvez S."/>
            <person name="Gajendran N."/>
            <person name="Brenner H.R."/>
        </authorList>
    </citation>
    <scope>FUNCTION IN TRANSCRIPTION REGULATION</scope>
</reference>
<reference key="8">
    <citation type="journal article" date="2003" name="Neuron">
        <title>Implication of geranylgeranyltransferase I in synapse formation.</title>
        <authorList>
            <person name="Luo Z.G."/>
            <person name="Je H.S."/>
            <person name="Wang Q."/>
            <person name="Yang F."/>
            <person name="Dobbins G.C."/>
            <person name="Yang Z.H."/>
            <person name="Xiong W.C."/>
            <person name="Lu B."/>
            <person name="Mei L."/>
        </authorList>
    </citation>
    <scope>FUNCTION IN RAC1 ACTIVATION</scope>
    <scope>FUNCTION IN PHOSPHORYLATION OF FNTA</scope>
    <scope>INTERACTION WITH FNTA</scope>
</reference>
<reference key="9">
    <citation type="journal article" date="2004" name="Gene Expr. Patterns">
        <title>A putative ariadne-like E3 ubiquitin ligase (PAUL) that interacts with the muscle-specific kinase (MuSK).</title>
        <authorList>
            <person name="Bromann P.A."/>
            <person name="Weiner J.A."/>
            <person name="Apel E.D."/>
            <person name="Lewis R.M."/>
            <person name="Sanes J.R."/>
        </authorList>
    </citation>
    <scope>INTERACTION WITH RNF31</scope>
</reference>
<reference key="10">
    <citation type="journal article" date="2004" name="Mol. Cell. Biol.">
        <title>A single pulse of agrin triggers a pathway that acts to cluster acetylcholine receptors.</title>
        <authorList>
            <person name="Mittaud P."/>
            <person name="Camilleri A.A."/>
            <person name="Willmann R."/>
            <person name="Erb-Voegtli S."/>
            <person name="Burden S.J."/>
            <person name="Fuhrer C."/>
        </authorList>
    </citation>
    <scope>FUNCTION IN ACETYLCHOLINE RECEPTOR CLUSTERING</scope>
</reference>
<reference key="11">
    <citation type="journal article" date="2006" name="Genes Dev.">
        <title>Casein kinase 2-dependent serine phosphorylation of MuSK regulates acetylcholine receptor aggregation at the neuromuscular junction.</title>
        <authorList>
            <person name="Cheusova T."/>
            <person name="Khan M.A."/>
            <person name="Schubert S.W."/>
            <person name="Gavin A.C."/>
            <person name="Buchou T."/>
            <person name="Jacob G."/>
            <person name="Sticht H."/>
            <person name="Allende J."/>
            <person name="Boldyreff B."/>
            <person name="Brenner H.R."/>
            <person name="Hashemolhosseini S."/>
        </authorList>
    </citation>
    <scope>ACTIVITY REGULATION</scope>
    <scope>PHOSPHORYLATION AT SER-680 AND SER-697 BY CK2</scope>
    <scope>INTERACTION WITH CSNK2B</scope>
</reference>
<reference key="12">
    <citation type="journal article" date="2006" name="Science">
        <title>The muscle protein Dok-7 is essential for neuromuscular synaptogenesis.</title>
        <authorList>
            <person name="Okada K."/>
            <person name="Inoue A."/>
            <person name="Okada M."/>
            <person name="Murata Y."/>
            <person name="Kakuta S."/>
            <person name="Jigami T."/>
            <person name="Kubo S."/>
            <person name="Shiraishi H."/>
            <person name="Eguchi K."/>
            <person name="Motomura M."/>
            <person name="Akiyama T."/>
            <person name="Iwakura Y."/>
            <person name="Higuchi O."/>
            <person name="Yamanashi Y."/>
        </authorList>
    </citation>
    <scope>INTERACTION WITH DOK7</scope>
    <scope>PHOSPHORYLATION AT TYR-553</scope>
    <scope>MUTAGENESIS OF TYR-553</scope>
</reference>
<reference key="13">
    <citation type="journal article" date="2007" name="J. Cell Biol.">
        <title>Regulation of synaptic growth and maturation by a synapse-associated E3 ubiquitin ligase at the neuromuscular junction.</title>
        <authorList>
            <person name="Lu Z."/>
            <person name="Je H.S."/>
            <person name="Young P."/>
            <person name="Gross J."/>
            <person name="Lu B."/>
            <person name="Feng G."/>
        </authorList>
    </citation>
    <scope>INTERACTION WITH PDZRN3</scope>
    <scope>UBIQUITINATION</scope>
</reference>
<reference key="14">
    <citation type="journal article" date="2008" name="Cell">
        <title>Lrp4 is a receptor for Agrin and forms a complex with MuSK.</title>
        <authorList>
            <person name="Kim N."/>
            <person name="Stiegler A.L."/>
            <person name="Cameron T.O."/>
            <person name="Hallock P.T."/>
            <person name="Gomez A.M."/>
            <person name="Huang J.H."/>
            <person name="Hubbard S.R."/>
            <person name="Dustin M.L."/>
            <person name="Burden S.J."/>
        </authorList>
    </citation>
    <scope>PHOSPHORYLATION</scope>
    <scope>INTERACTION WITH LRP4</scope>
</reference>
<reference key="15">
    <citation type="journal article" date="2008" name="J. Neurosci.">
        <title>Muscle-specific receptor tyrosine kinase endocytosis in acetylcholine receptor clustering in response to agrin.</title>
        <authorList>
            <person name="Zhu D."/>
            <person name="Yang Z."/>
            <person name="Luo Z."/>
            <person name="Luo S."/>
            <person name="Xiong W.C."/>
            <person name="Mei L."/>
        </authorList>
    </citation>
    <scope>INTERACTION WITH NSF</scope>
</reference>
<reference key="16">
    <citation type="journal article" date="2008" name="Neuron">
        <title>A mammalian homolog of Drosophila tumorous imaginal discs, Tid1, mediates agrin signaling at the neuromuscular junction.</title>
        <authorList>
            <person name="Linnoila J."/>
            <person name="Wang Y."/>
            <person name="Yao Y."/>
            <person name="Wang Z.Z."/>
        </authorList>
    </citation>
    <scope>INTERACTION WITH DNAJA3</scope>
    <scope>SUBCELLULAR LOCATION</scope>
</reference>
<reference key="17">
    <citation type="journal article" date="2010" name="Mol. Biol. Cell">
        <title>Caveolin-3 promotes nicotinic acetylcholine receptor clustering and regulates neuromuscular junction activity.</title>
        <authorList>
            <person name="Hezel M."/>
            <person name="de Groat W.C."/>
            <person name="Galbiati F."/>
        </authorList>
    </citation>
    <scope>INTERACTION WITH CAV3</scope>
</reference>
<reference key="18">
    <citation type="journal article" date="2010" name="Mol. Cell">
        <title>The cytoplasmic adaptor protein Dok7 activates the receptor tyrosine kinase MuSK via dimerization.</title>
        <authorList>
            <person name="Bergamin E."/>
            <person name="Hallock P.T."/>
            <person name="Burden S.J."/>
            <person name="Hubbard S.R."/>
        </authorList>
    </citation>
    <scope>X-RAY CRYSTALLOGRAPHY (2.6 ANGSTROMS) OF 544-556 IN COMPLEX WITH DOK7</scope>
    <scope>INTERACTION WITH DOK7</scope>
    <scope>PHOSPHORYLATION AT TYR-553</scope>
</reference>
<evidence type="ECO:0000250" key="1"/>
<evidence type="ECO:0000250" key="2">
    <source>
        <dbReference type="UniProtKB" id="O15146"/>
    </source>
</evidence>
<evidence type="ECO:0000250" key="3">
    <source>
        <dbReference type="UniProtKB" id="Q62838"/>
    </source>
</evidence>
<evidence type="ECO:0000255" key="4"/>
<evidence type="ECO:0000255" key="5">
    <source>
        <dbReference type="PROSITE-ProRule" id="PRU00090"/>
    </source>
</evidence>
<evidence type="ECO:0000255" key="6">
    <source>
        <dbReference type="PROSITE-ProRule" id="PRU00159"/>
    </source>
</evidence>
<evidence type="ECO:0000255" key="7">
    <source>
        <dbReference type="PROSITE-ProRule" id="PRU10028"/>
    </source>
</evidence>
<evidence type="ECO:0000269" key="8">
    <source>
    </source>
</evidence>
<evidence type="ECO:0000269" key="9">
    <source>
    </source>
</evidence>
<evidence type="ECO:0000269" key="10">
    <source>
    </source>
</evidence>
<evidence type="ECO:0000269" key="11">
    <source>
    </source>
</evidence>
<evidence type="ECO:0000269" key="12">
    <source>
    </source>
</evidence>
<evidence type="ECO:0000269" key="13">
    <source>
    </source>
</evidence>
<evidence type="ECO:0000269" key="14">
    <source>
    </source>
</evidence>
<evidence type="ECO:0000269" key="15">
    <source>
    </source>
</evidence>
<evidence type="ECO:0000269" key="16">
    <source>
    </source>
</evidence>
<evidence type="ECO:0000269" key="17">
    <source>
    </source>
</evidence>
<evidence type="ECO:0000269" key="18">
    <source>
    </source>
</evidence>
<evidence type="ECO:0000269" key="19">
    <source>
    </source>
</evidence>
<evidence type="ECO:0000269" key="20">
    <source>
    </source>
</evidence>
<evidence type="ECO:0000269" key="21">
    <source>
    </source>
</evidence>
<evidence type="ECO:0000269" key="22">
    <source>
    </source>
</evidence>
<evidence type="ECO:0000269" key="23">
    <source>
    </source>
</evidence>
<evidence type="ECO:0000269" key="24">
    <source>
    </source>
</evidence>
<evidence type="ECO:0000303" key="25">
    <source>
    </source>
</evidence>
<evidence type="ECO:0000303" key="26">
    <source ref="1"/>
</evidence>
<evidence type="ECO:0000305" key="27"/>
<evidence type="ECO:0000305" key="28">
    <source>
    </source>
</evidence>
<evidence type="ECO:0007829" key="29">
    <source>
        <dbReference type="PDB" id="3ML4"/>
    </source>
</evidence>
<proteinExistence type="evidence at protein level"/>
<sequence>MRELVNIPLLQMLTLVAFSGTEKLPKAPVITTPLETVDALVEEVATFMCAVESYPQPEISWTRNKILIKLFDTRYSIRENGQLLTILSVEDSDDGIYCCIANNGVGGAVESCGALQVKMKPKITRPPINVKIIEGLKAVLPCTTMGNPKPSVSWIKGDNALRENSRIAVLESGSLRIHNVQKEDAGQYRCVAKNSLGTAYSKLVKLEVEVFARILRAPESHNVTFGSFVTLRCTAIGIPVPTISWIENGNAVSSGSIQESVKDRVIDSRLQLFITKPGLYTCIATNKHGEKFSTAKAAATVSIAEWSKSQKDSQGYCAQYRGEVCDAVLAKDALVFFNTSYRDPEDAQELLIHTAWNELKAVSPLCRPAAEALLCNHLFQECSPGVVPTPMPICREYCLAVKELFCAKEWQAMEGKAHRGLYRSGMHLLPVPECSKLPSMHRDPTACTRLPYLDYKKENITTFPSITSSRPSADIPNLPASTSSFAVSPAYSMTVIISIVSSFALFALLTIATLYCCRRRKEWKNKKRESTAVTLTTLPSELLLDRLHPNPMYQRMPLLLNPKLLSLEYPRNNIEYVRDIGEGAFGRVFQARAPGLLPYEPFTMVAVKMLKEEASADMQADFQREAALMAEFDNPNIVKLLGVCAVGKPMCLLFEYMAYGDLNEFLRSMSPHTVCSLSHSDLSTRARVSSPGPPPLSCAEQLCIARQVAAGMAYLSERKFVHRDLATRNCLVGETMVVKIADFGLSRNIYSADYYKADGNDAIPIRWMPPESIFYNRYTTESDVWAYGVVLWEIFSYGLQPYYGMAHEEVIYYVRDGNILACPENCPLELYNLMRLCWSKLPADRPSFCSIHRILQRMCERAEGTVGV</sequence>
<protein>
    <recommendedName>
        <fullName>Muscle, skeletal receptor tyrosine-protein kinase</fullName>
        <ecNumber>2.7.10.1</ecNumber>
    </recommendedName>
    <alternativeName>
        <fullName>Muscle-specific tyrosine-protein kinase receptor</fullName>
        <shortName>MuSK</shortName>
        <shortName>Muscle-specific kinase receptor</shortName>
    </alternativeName>
</protein>
<feature type="signal peptide" evidence="4">
    <location>
        <begin position="1"/>
        <end position="21"/>
    </location>
</feature>
<feature type="chain" id="PRO_0000024447" description="Muscle, skeletal receptor tyrosine-protein kinase">
    <location>
        <begin position="22"/>
        <end position="868"/>
    </location>
</feature>
<feature type="topological domain" description="Extracellular" evidence="4">
    <location>
        <begin position="22"/>
        <end position="494"/>
    </location>
</feature>
<feature type="transmembrane region" description="Helical" evidence="4">
    <location>
        <begin position="495"/>
        <end position="515"/>
    </location>
</feature>
<feature type="topological domain" description="Cytoplasmic" evidence="4">
    <location>
        <begin position="516"/>
        <end position="868"/>
    </location>
</feature>
<feature type="domain" description="Ig-like 1">
    <location>
        <begin position="28"/>
        <end position="116"/>
    </location>
</feature>
<feature type="domain" description="Ig-like 2">
    <location>
        <begin position="121"/>
        <end position="205"/>
    </location>
</feature>
<feature type="domain" description="Ig-like 3">
    <location>
        <begin position="212"/>
        <end position="302"/>
    </location>
</feature>
<feature type="domain" description="FZ" evidence="5">
    <location>
        <begin position="312"/>
        <end position="450"/>
    </location>
</feature>
<feature type="domain" description="Protein kinase" evidence="6">
    <location>
        <begin position="574"/>
        <end position="855"/>
    </location>
</feature>
<feature type="active site" description="Proton acceptor" evidence="6 7">
    <location>
        <position position="724"/>
    </location>
</feature>
<feature type="binding site" evidence="6">
    <location>
        <begin position="580"/>
        <end position="588"/>
    </location>
    <ligand>
        <name>ATP</name>
        <dbReference type="ChEBI" id="CHEBI:30616"/>
    </ligand>
</feature>
<feature type="binding site" evidence="6">
    <location>
        <position position="608"/>
    </location>
    <ligand>
        <name>ATP</name>
        <dbReference type="ChEBI" id="CHEBI:30616"/>
    </ligand>
</feature>
<feature type="modified residue" description="Phosphotyrosine; by autocatalysis" evidence="14 21">
    <location>
        <position position="553"/>
    </location>
</feature>
<feature type="modified residue" description="Phosphoserine; by CK2" evidence="28">
    <location>
        <position position="680"/>
    </location>
</feature>
<feature type="modified residue" description="Phosphoserine; by CK2" evidence="28">
    <location>
        <position position="697"/>
    </location>
</feature>
<feature type="modified residue" description="Phosphotyrosine; by autocatalysis" evidence="3">
    <location>
        <position position="754"/>
    </location>
</feature>
<feature type="glycosylation site" description="N-linked (GlcNAc...) asparagine" evidence="4">
    <location>
        <position position="222"/>
    </location>
</feature>
<feature type="glycosylation site" description="N-linked (GlcNAc...) asparagine" evidence="1">
    <location>
        <position position="338"/>
    </location>
</feature>
<feature type="glycosylation site" description="N-linked (GlcNAc...) asparagine" evidence="4">
    <location>
        <position position="459"/>
    </location>
</feature>
<feature type="disulfide bond" evidence="1">
    <location>
        <begin position="49"/>
        <end position="99"/>
    </location>
</feature>
<feature type="disulfide bond" evidence="1">
    <location>
        <begin position="98"/>
        <end position="112"/>
    </location>
</feature>
<feature type="disulfide bond" evidence="1">
    <location>
        <begin position="142"/>
        <end position="190"/>
    </location>
</feature>
<feature type="disulfide bond" evidence="1">
    <location>
        <begin position="233"/>
        <end position="282"/>
    </location>
</feature>
<feature type="disulfide bond" evidence="1">
    <location>
        <begin position="317"/>
        <end position="382"/>
    </location>
</feature>
<feature type="disulfide bond" evidence="1">
    <location>
        <begin position="325"/>
        <end position="375"/>
    </location>
</feature>
<feature type="disulfide bond" evidence="1">
    <location>
        <begin position="366"/>
        <end position="406"/>
    </location>
</feature>
<feature type="disulfide bond" evidence="1">
    <location>
        <begin position="394"/>
        <end position="447"/>
    </location>
</feature>
<feature type="disulfide bond" evidence="1">
    <location>
        <begin position="398"/>
        <end position="434"/>
    </location>
</feature>
<feature type="splice variant" id="VSP_010785" description="In isoform 3." evidence="25">
    <original>VCDAVLAKDALVFFN</original>
    <variation>GVLMQGPGEKMLLVFLPT</variation>
    <location>
        <begin position="324"/>
        <end position="338"/>
    </location>
</feature>
<feature type="splice variant" id="VSP_010784" description="In isoform 2." evidence="26">
    <original>DYKKENITT</original>
    <variation>A</variation>
    <location>
        <begin position="454"/>
        <end position="462"/>
    </location>
</feature>
<feature type="splice variant" id="VSP_010786" description="In isoform 4." evidence="25">
    <original>VGV</original>
    <variation>TDGRAHFFWPHQY</variation>
    <location>
        <begin position="866"/>
        <end position="868"/>
    </location>
</feature>
<feature type="mutagenesis site" description="Loss of interaction with DOK7." evidence="14">
    <original>Y</original>
    <variation>F</variation>
    <location>
        <position position="553"/>
    </location>
</feature>
<feature type="sequence conflict" description="In Ref. 2; CAA60165/CAA60166." evidence="27" ref="2">
    <original>T</original>
    <variation>A</variation>
    <location>
        <position position="31"/>
    </location>
</feature>
<feature type="sequence conflict" description="In Ref. 2; CAA60165/CAA60166." evidence="27" ref="2">
    <original>V</original>
    <variation>A</variation>
    <location>
        <position position="169"/>
    </location>
</feature>
<feature type="sequence conflict" description="In Ref. 2; CAA60165/CAA60166." evidence="27" ref="2">
    <original>FA</original>
    <variation>LG</variation>
    <location>
        <begin position="211"/>
        <end position="212"/>
    </location>
</feature>
<feature type="sequence conflict" description="In Ref. 2; CAA60165/CAA60166." evidence="27" ref="2">
    <original>A</original>
    <variation>E</variation>
    <location>
        <position position="235"/>
    </location>
</feature>
<feature type="sequence conflict" description="In Ref. 2; CAA60165/CAA60166." evidence="27" ref="2">
    <original>Y</original>
    <variation>H</variation>
    <location>
        <position position="341"/>
    </location>
</feature>
<feature type="sequence conflict" description="In Ref. 2; CAA60165/CAA60166." evidence="27" ref="2">
    <original>N</original>
    <variation>Y</variation>
    <location>
        <position position="376"/>
    </location>
</feature>
<feature type="sequence conflict" description="In Ref. 2; CAA60165/CAA60166." evidence="27" ref="2">
    <original>Q</original>
    <variation>L</variation>
    <location>
        <position position="380"/>
    </location>
</feature>
<feature type="sequence conflict" description="In Ref. 2; CAA60165/CAA60166." evidence="27" ref="2">
    <original>S</original>
    <variation>R</variation>
    <location>
        <position position="435"/>
    </location>
</feature>
<feature type="sequence conflict" description="In Ref. 2; CAA60165/CAA60166." evidence="27" ref="2">
    <original>F</original>
    <variation>L</variation>
    <location>
        <position position="503"/>
    </location>
</feature>
<feature type="sequence conflict" description="In Ref. 2; CAA60165/CAA60166." evidence="27" ref="2">
    <original>A</original>
    <variation>V</variation>
    <location>
        <position position="512"/>
    </location>
</feature>
<feature type="turn" evidence="29">
    <location>
        <begin position="551"/>
        <end position="554"/>
    </location>
</feature>